<organism>
    <name type="scientific">Psilotum nudum</name>
    <name type="common">Whisk fern</name>
    <name type="synonym">Lycopodium nudum</name>
    <dbReference type="NCBI Taxonomy" id="3240"/>
    <lineage>
        <taxon>Eukaryota</taxon>
        <taxon>Viridiplantae</taxon>
        <taxon>Streptophyta</taxon>
        <taxon>Embryophyta</taxon>
        <taxon>Tracheophyta</taxon>
        <taxon>Polypodiopsida</taxon>
        <taxon>Ophioglossidae</taxon>
        <taxon>Psilotales</taxon>
        <taxon>Psilotaceae</taxon>
        <taxon>Psilotum</taxon>
    </lineage>
</organism>
<reference key="1">
    <citation type="journal article" date="2004" name="Mol. Biol. Evol.">
        <title>Chloroplast phylogeny indicates that bryophytes are monophyletic.</title>
        <authorList>
            <person name="Nishiyama T."/>
            <person name="Wolf P.G."/>
            <person name="Kugita M."/>
            <person name="Sinclair R.B."/>
            <person name="Sugita M."/>
            <person name="Sugiura C."/>
            <person name="Wakasugi T."/>
            <person name="Yamada K."/>
            <person name="Yoshinaga K."/>
            <person name="Yamaguchi K."/>
            <person name="Ueda K."/>
            <person name="Hasebe M."/>
        </authorList>
    </citation>
    <scope>NUCLEOTIDE SEQUENCE [LARGE SCALE GENOMIC DNA]</scope>
    <source>
        <strain>Kingyoku</strain>
    </source>
</reference>
<comment type="subunit">
    <text evidence="1">Part of the 50S ribosomal subunit.</text>
</comment>
<comment type="subcellular location">
    <subcellularLocation>
        <location>Plastid</location>
        <location>Chloroplast</location>
    </subcellularLocation>
</comment>
<comment type="similarity">
    <text evidence="1">Belongs to the universal ribosomal protein uL16 family.</text>
</comment>
<feature type="chain" id="PRO_0000062309" description="Large ribosomal subunit protein uL16c">
    <location>
        <begin position="1"/>
        <end position="140"/>
    </location>
</feature>
<name>RK16_PSINU</name>
<proteinExistence type="inferred from homology"/>
<protein>
    <recommendedName>
        <fullName evidence="1">Large ribosomal subunit protein uL16c</fullName>
    </recommendedName>
    <alternativeName>
        <fullName evidence="2">50S ribosomal protein L16, chloroplastic</fullName>
    </alternativeName>
</protein>
<evidence type="ECO:0000255" key="1">
    <source>
        <dbReference type="HAMAP-Rule" id="MF_01342"/>
    </source>
</evidence>
<evidence type="ECO:0000305" key="2"/>
<geneLocation type="chloroplast"/>
<accession>Q8WHY5</accession>
<gene>
    <name evidence="1" type="primary">rpl16</name>
</gene>
<sequence length="140" mass="15940">MLSPKRTRFRKQHRGRMKGVSTRGNRICFGKFALQALEPAWITARQIEAGRRVIARYARRGGKMWIRIFPDKPITMRPAETRMGSGKGSPEYWVAVVKKGRILYEINGVSEKMAQAAMKIAAHKMPIHTKFITLSQLTNG</sequence>
<dbReference type="EMBL" id="AP004638">
    <property type="protein sequence ID" value="BAB84254.1"/>
    <property type="molecule type" value="Genomic_DNA"/>
</dbReference>
<dbReference type="RefSeq" id="NP_569666.1">
    <property type="nucleotide sequence ID" value="NC_003386.1"/>
</dbReference>
<dbReference type="SMR" id="Q8WHY5"/>
<dbReference type="GeneID" id="2545155"/>
<dbReference type="GO" id="GO:0009507">
    <property type="term" value="C:chloroplast"/>
    <property type="evidence" value="ECO:0007669"/>
    <property type="project" value="UniProtKB-SubCell"/>
</dbReference>
<dbReference type="GO" id="GO:0005762">
    <property type="term" value="C:mitochondrial large ribosomal subunit"/>
    <property type="evidence" value="ECO:0007669"/>
    <property type="project" value="TreeGrafter"/>
</dbReference>
<dbReference type="GO" id="GO:0019843">
    <property type="term" value="F:rRNA binding"/>
    <property type="evidence" value="ECO:0007669"/>
    <property type="project" value="InterPro"/>
</dbReference>
<dbReference type="GO" id="GO:0003735">
    <property type="term" value="F:structural constituent of ribosome"/>
    <property type="evidence" value="ECO:0007669"/>
    <property type="project" value="InterPro"/>
</dbReference>
<dbReference type="GO" id="GO:0032543">
    <property type="term" value="P:mitochondrial translation"/>
    <property type="evidence" value="ECO:0007669"/>
    <property type="project" value="TreeGrafter"/>
</dbReference>
<dbReference type="CDD" id="cd01433">
    <property type="entry name" value="Ribosomal_L16_L10e"/>
    <property type="match status" value="1"/>
</dbReference>
<dbReference type="FunFam" id="3.90.1170.10:FF:000001">
    <property type="entry name" value="50S ribosomal protein L16"/>
    <property type="match status" value="1"/>
</dbReference>
<dbReference type="Gene3D" id="3.90.1170.10">
    <property type="entry name" value="Ribosomal protein L10e/L16"/>
    <property type="match status" value="1"/>
</dbReference>
<dbReference type="HAMAP" id="MF_01342">
    <property type="entry name" value="Ribosomal_uL16"/>
    <property type="match status" value="1"/>
</dbReference>
<dbReference type="InterPro" id="IPR047873">
    <property type="entry name" value="Ribosomal_uL16"/>
</dbReference>
<dbReference type="InterPro" id="IPR000114">
    <property type="entry name" value="Ribosomal_uL16_bact-type"/>
</dbReference>
<dbReference type="InterPro" id="IPR020798">
    <property type="entry name" value="Ribosomal_uL16_CS"/>
</dbReference>
<dbReference type="InterPro" id="IPR016180">
    <property type="entry name" value="Ribosomal_uL16_dom"/>
</dbReference>
<dbReference type="InterPro" id="IPR036920">
    <property type="entry name" value="Ribosomal_uL16_sf"/>
</dbReference>
<dbReference type="NCBIfam" id="TIGR01164">
    <property type="entry name" value="rplP_bact"/>
    <property type="match status" value="1"/>
</dbReference>
<dbReference type="PANTHER" id="PTHR12220">
    <property type="entry name" value="50S/60S RIBOSOMAL PROTEIN L16"/>
    <property type="match status" value="1"/>
</dbReference>
<dbReference type="PANTHER" id="PTHR12220:SF13">
    <property type="entry name" value="LARGE RIBOSOMAL SUBUNIT PROTEIN UL16M"/>
    <property type="match status" value="1"/>
</dbReference>
<dbReference type="Pfam" id="PF00252">
    <property type="entry name" value="Ribosomal_L16"/>
    <property type="match status" value="1"/>
</dbReference>
<dbReference type="PRINTS" id="PR00060">
    <property type="entry name" value="RIBOSOMALL16"/>
</dbReference>
<dbReference type="SUPFAM" id="SSF54686">
    <property type="entry name" value="Ribosomal protein L16p/L10e"/>
    <property type="match status" value="1"/>
</dbReference>
<dbReference type="PROSITE" id="PS00586">
    <property type="entry name" value="RIBOSOMAL_L16_1"/>
    <property type="match status" value="1"/>
</dbReference>
<dbReference type="PROSITE" id="PS00701">
    <property type="entry name" value="RIBOSOMAL_L16_2"/>
    <property type="match status" value="1"/>
</dbReference>
<keyword id="KW-0150">Chloroplast</keyword>
<keyword id="KW-0934">Plastid</keyword>
<keyword id="KW-0687">Ribonucleoprotein</keyword>
<keyword id="KW-0689">Ribosomal protein</keyword>